<feature type="signal peptide" evidence="2">
    <location>
        <begin position="1"/>
        <end position="26"/>
    </location>
</feature>
<feature type="chain" id="PRO_0000031927" description="Putative defensin-like protein 225">
    <location>
        <begin position="27"/>
        <end position="92"/>
    </location>
</feature>
<feature type="disulfide bond" evidence="1">
    <location>
        <begin position="32"/>
        <end position="92"/>
    </location>
</feature>
<feature type="disulfide bond" evidence="1">
    <location>
        <begin position="42"/>
        <end position="70"/>
    </location>
</feature>
<feature type="disulfide bond" evidence="1">
    <location>
        <begin position="68"/>
        <end position="88"/>
    </location>
</feature>
<protein>
    <recommendedName>
        <fullName>Putative defensin-like protein 225</fullName>
    </recommendedName>
    <alternativeName>
        <fullName>Putative S locus cysteine-rich-like protein 1</fullName>
        <shortName>Protein SCRL1</shortName>
        <shortName>SCR-like protein 1</shortName>
    </alternativeName>
</protein>
<sequence>MKYGVLFMVSCGVMFLILSHVEEVEAMKKFGCNTTHPFPGKCGNNGKSSWVSDMKKLPSAPKNRDIRCECSDRPSLARGMPGERVCRCDYDC</sequence>
<keyword id="KW-0929">Antimicrobial</keyword>
<keyword id="KW-1015">Disulfide bond</keyword>
<keyword id="KW-0295">Fungicide</keyword>
<keyword id="KW-0611">Plant defense</keyword>
<keyword id="KW-1185">Reference proteome</keyword>
<keyword id="KW-0964">Secreted</keyword>
<keyword id="KW-0732">Signal</keyword>
<reference key="1">
    <citation type="journal article" date="1999" name="Nature">
        <title>Sequence and analysis of chromosome 4 of the plant Arabidopsis thaliana.</title>
        <authorList>
            <person name="Mayer K.F.X."/>
            <person name="Schueller C."/>
            <person name="Wambutt R."/>
            <person name="Murphy G."/>
            <person name="Volckaert G."/>
            <person name="Pohl T."/>
            <person name="Duesterhoeft A."/>
            <person name="Stiekema W."/>
            <person name="Entian K.-D."/>
            <person name="Terryn N."/>
            <person name="Harris B."/>
            <person name="Ansorge W."/>
            <person name="Brandt P."/>
            <person name="Grivell L.A."/>
            <person name="Rieger M."/>
            <person name="Weichselgartner M."/>
            <person name="de Simone V."/>
            <person name="Obermaier B."/>
            <person name="Mache R."/>
            <person name="Mueller M."/>
            <person name="Kreis M."/>
            <person name="Delseny M."/>
            <person name="Puigdomenech P."/>
            <person name="Watson M."/>
            <person name="Schmidtheini T."/>
            <person name="Reichert B."/>
            <person name="Portetelle D."/>
            <person name="Perez-Alonso M."/>
            <person name="Boutry M."/>
            <person name="Bancroft I."/>
            <person name="Vos P."/>
            <person name="Hoheisel J."/>
            <person name="Zimmermann W."/>
            <person name="Wedler H."/>
            <person name="Ridley P."/>
            <person name="Langham S.-A."/>
            <person name="McCullagh B."/>
            <person name="Bilham L."/>
            <person name="Robben J."/>
            <person name="van der Schueren J."/>
            <person name="Grymonprez B."/>
            <person name="Chuang Y.-J."/>
            <person name="Vandenbussche F."/>
            <person name="Braeken M."/>
            <person name="Weltjens I."/>
            <person name="Voet M."/>
            <person name="Bastiaens I."/>
            <person name="Aert R."/>
            <person name="Defoor E."/>
            <person name="Weitzenegger T."/>
            <person name="Bothe G."/>
            <person name="Ramsperger U."/>
            <person name="Hilbert H."/>
            <person name="Braun M."/>
            <person name="Holzer E."/>
            <person name="Brandt A."/>
            <person name="Peters S."/>
            <person name="van Staveren M."/>
            <person name="Dirkse W."/>
            <person name="Mooijman P."/>
            <person name="Klein Lankhorst R."/>
            <person name="Rose M."/>
            <person name="Hauf J."/>
            <person name="Koetter P."/>
            <person name="Berneiser S."/>
            <person name="Hempel S."/>
            <person name="Feldpausch M."/>
            <person name="Lamberth S."/>
            <person name="Van den Daele H."/>
            <person name="De Keyser A."/>
            <person name="Buysshaert C."/>
            <person name="Gielen J."/>
            <person name="Villarroel R."/>
            <person name="De Clercq R."/>
            <person name="van Montagu M."/>
            <person name="Rogers J."/>
            <person name="Cronin A."/>
            <person name="Quail M.A."/>
            <person name="Bray-Allen S."/>
            <person name="Clark L."/>
            <person name="Doggett J."/>
            <person name="Hall S."/>
            <person name="Kay M."/>
            <person name="Lennard N."/>
            <person name="McLay K."/>
            <person name="Mayes R."/>
            <person name="Pettett A."/>
            <person name="Rajandream M.A."/>
            <person name="Lyne M."/>
            <person name="Benes V."/>
            <person name="Rechmann S."/>
            <person name="Borkova D."/>
            <person name="Bloecker H."/>
            <person name="Scharfe M."/>
            <person name="Grimm M."/>
            <person name="Loehnert T.-H."/>
            <person name="Dose S."/>
            <person name="de Haan M."/>
            <person name="Maarse A.C."/>
            <person name="Schaefer M."/>
            <person name="Mueller-Auer S."/>
            <person name="Gabel C."/>
            <person name="Fuchs M."/>
            <person name="Fartmann B."/>
            <person name="Granderath K."/>
            <person name="Dauner D."/>
            <person name="Herzl A."/>
            <person name="Neumann S."/>
            <person name="Argiriou A."/>
            <person name="Vitale D."/>
            <person name="Liguori R."/>
            <person name="Piravandi E."/>
            <person name="Massenet O."/>
            <person name="Quigley F."/>
            <person name="Clabauld G."/>
            <person name="Muendlein A."/>
            <person name="Felber R."/>
            <person name="Schnabl S."/>
            <person name="Hiller R."/>
            <person name="Schmidt W."/>
            <person name="Lecharny A."/>
            <person name="Aubourg S."/>
            <person name="Chefdor F."/>
            <person name="Cooke R."/>
            <person name="Berger C."/>
            <person name="Monfort A."/>
            <person name="Casacuberta E."/>
            <person name="Gibbons T."/>
            <person name="Weber N."/>
            <person name="Vandenbol M."/>
            <person name="Bargues M."/>
            <person name="Terol J."/>
            <person name="Torres A."/>
            <person name="Perez-Perez A."/>
            <person name="Purnelle B."/>
            <person name="Bent E."/>
            <person name="Johnson S."/>
            <person name="Tacon D."/>
            <person name="Jesse T."/>
            <person name="Heijnen L."/>
            <person name="Schwarz S."/>
            <person name="Scholler P."/>
            <person name="Heber S."/>
            <person name="Francs P."/>
            <person name="Bielke C."/>
            <person name="Frishman D."/>
            <person name="Haase D."/>
            <person name="Lemcke K."/>
            <person name="Mewes H.-W."/>
            <person name="Stocker S."/>
            <person name="Zaccaria P."/>
            <person name="Bevan M."/>
            <person name="Wilson R.K."/>
            <person name="de la Bastide M."/>
            <person name="Habermann K."/>
            <person name="Parnell L."/>
            <person name="Dedhia N."/>
            <person name="Gnoj L."/>
            <person name="Schutz K."/>
            <person name="Huang E."/>
            <person name="Spiegel L."/>
            <person name="Sekhon M."/>
            <person name="Murray J."/>
            <person name="Sheet P."/>
            <person name="Cordes M."/>
            <person name="Abu-Threideh J."/>
            <person name="Stoneking T."/>
            <person name="Kalicki J."/>
            <person name="Graves T."/>
            <person name="Harmon G."/>
            <person name="Edwards J."/>
            <person name="Latreille P."/>
            <person name="Courtney L."/>
            <person name="Cloud J."/>
            <person name="Abbott A."/>
            <person name="Scott K."/>
            <person name="Johnson D."/>
            <person name="Minx P."/>
            <person name="Bentley D."/>
            <person name="Fulton B."/>
            <person name="Miller N."/>
            <person name="Greco T."/>
            <person name="Kemp K."/>
            <person name="Kramer J."/>
            <person name="Fulton L."/>
            <person name="Mardis E."/>
            <person name="Dante M."/>
            <person name="Pepin K."/>
            <person name="Hillier L.W."/>
            <person name="Nelson J."/>
            <person name="Spieth J."/>
            <person name="Ryan E."/>
            <person name="Andrews S."/>
            <person name="Geisel C."/>
            <person name="Layman D."/>
            <person name="Du H."/>
            <person name="Ali J."/>
            <person name="Berghoff A."/>
            <person name="Jones K."/>
            <person name="Drone K."/>
            <person name="Cotton M."/>
            <person name="Joshu C."/>
            <person name="Antonoiu B."/>
            <person name="Zidanic M."/>
            <person name="Strong C."/>
            <person name="Sun H."/>
            <person name="Lamar B."/>
            <person name="Yordan C."/>
            <person name="Ma P."/>
            <person name="Zhong J."/>
            <person name="Preston R."/>
            <person name="Vil D."/>
            <person name="Shekher M."/>
            <person name="Matero A."/>
            <person name="Shah R."/>
            <person name="Swaby I.K."/>
            <person name="O'Shaughnessy A."/>
            <person name="Rodriguez M."/>
            <person name="Hoffman J."/>
            <person name="Till S."/>
            <person name="Granat S."/>
            <person name="Shohdy N."/>
            <person name="Hasegawa A."/>
            <person name="Hameed A."/>
            <person name="Lodhi M."/>
            <person name="Johnson A."/>
            <person name="Chen E."/>
            <person name="Marra M.A."/>
            <person name="Martienssen R."/>
            <person name="McCombie W.R."/>
        </authorList>
    </citation>
    <scope>NUCLEOTIDE SEQUENCE [LARGE SCALE GENOMIC DNA]</scope>
    <source>
        <strain>cv. Columbia</strain>
    </source>
</reference>
<reference key="2">
    <citation type="journal article" date="2017" name="Plant J.">
        <title>Araport11: a complete reannotation of the Arabidopsis thaliana reference genome.</title>
        <authorList>
            <person name="Cheng C.Y."/>
            <person name="Krishnakumar V."/>
            <person name="Chan A.P."/>
            <person name="Thibaud-Nissen F."/>
            <person name="Schobel S."/>
            <person name="Town C.D."/>
        </authorList>
    </citation>
    <scope>GENOME REANNOTATION</scope>
    <source>
        <strain>cv. Columbia</strain>
    </source>
</reference>
<reference key="3">
    <citation type="journal article" date="2001" name="Plant Mol. Biol.">
        <title>Two large Arabidopsis thaliana gene families are homologous to the Brassica gene superfamily that encodes pollen coat proteins and the male component of the self-incompatibility response.</title>
        <authorList>
            <person name="Vanoosthuyse V."/>
            <person name="Miege C."/>
            <person name="Dumas C."/>
            <person name="Cock J.M."/>
        </authorList>
    </citation>
    <scope>IDENTIFICATION</scope>
</reference>
<reference key="4">
    <citation type="journal article" date="2005" name="Plant Physiol.">
        <title>Genome organization of more than 300 defensin-like genes in Arabidopsis.</title>
        <authorList>
            <person name="Silverstein K.A.T."/>
            <person name="Graham M.A."/>
            <person name="Paape T.D."/>
            <person name="VandenBosch K.A."/>
        </authorList>
    </citation>
    <scope>GENE FAMILY</scope>
</reference>
<name>DF225_ARATH</name>
<evidence type="ECO:0000250" key="1"/>
<evidence type="ECO:0000255" key="2"/>
<evidence type="ECO:0000305" key="3"/>
<gene>
    <name type="primary">SCRL1</name>
    <name type="ordered locus">At4g10457</name>
    <name type="ORF">F7L13</name>
</gene>
<dbReference type="EMBL" id="AL049524">
    <property type="status" value="NOT_ANNOTATED_CDS"/>
    <property type="molecule type" value="Genomic_DNA"/>
</dbReference>
<dbReference type="EMBL" id="AL161517">
    <property type="status" value="NOT_ANNOTATED_CDS"/>
    <property type="molecule type" value="Genomic_DNA"/>
</dbReference>
<dbReference type="EMBL" id="CP002687">
    <property type="protein sequence ID" value="AEE82885.1"/>
    <property type="molecule type" value="Genomic_DNA"/>
</dbReference>
<dbReference type="RefSeq" id="NP_001031611.1">
    <property type="nucleotide sequence ID" value="NM_001036534.1"/>
</dbReference>
<dbReference type="PaxDb" id="3702-AT4G10457.1"/>
<dbReference type="EnsemblPlants" id="AT4G10457.1">
    <property type="protein sequence ID" value="AT4G10457.1"/>
    <property type="gene ID" value="AT4G10457"/>
</dbReference>
<dbReference type="GeneID" id="3770224"/>
<dbReference type="Gramene" id="AT4G10457.1">
    <property type="protein sequence ID" value="AT4G10457.1"/>
    <property type="gene ID" value="AT4G10457"/>
</dbReference>
<dbReference type="KEGG" id="ath:AT4G10457"/>
<dbReference type="Araport" id="AT4G10457"/>
<dbReference type="TAIR" id="AT4G10457">
    <property type="gene designation" value="SCRL1"/>
</dbReference>
<dbReference type="HOGENOM" id="CLU_174283_0_0_1"/>
<dbReference type="InParanoid" id="P82620"/>
<dbReference type="OMA" id="CACQHDC"/>
<dbReference type="PhylomeDB" id="P82620"/>
<dbReference type="Proteomes" id="UP000006548">
    <property type="component" value="Chromosome 4"/>
</dbReference>
<dbReference type="ExpressionAtlas" id="P82620">
    <property type="expression patterns" value="baseline"/>
</dbReference>
<dbReference type="GO" id="GO:0005576">
    <property type="term" value="C:extracellular region"/>
    <property type="evidence" value="ECO:0007669"/>
    <property type="project" value="UniProtKB-SubCell"/>
</dbReference>
<dbReference type="GO" id="GO:0050832">
    <property type="term" value="P:defense response to fungus"/>
    <property type="evidence" value="ECO:0007669"/>
    <property type="project" value="UniProtKB-KW"/>
</dbReference>
<dbReference type="GO" id="GO:0031640">
    <property type="term" value="P:killing of cells of another organism"/>
    <property type="evidence" value="ECO:0007669"/>
    <property type="project" value="UniProtKB-KW"/>
</dbReference>
<dbReference type="GO" id="GO:0007165">
    <property type="term" value="P:signal transduction"/>
    <property type="evidence" value="ECO:0007669"/>
    <property type="project" value="InterPro"/>
</dbReference>
<dbReference type="InterPro" id="IPR010682">
    <property type="entry name" value="SCRL"/>
</dbReference>
<dbReference type="PANTHER" id="PTHR34450:SF4">
    <property type="entry name" value="DEFENSIN-LIKE PROTEIN 226-RELATED"/>
    <property type="match status" value="1"/>
</dbReference>
<dbReference type="PANTHER" id="PTHR34450">
    <property type="entry name" value="DEFENSIN-LIKE PROTEIN 245-RELATED"/>
    <property type="match status" value="1"/>
</dbReference>
<dbReference type="Pfam" id="PF06876">
    <property type="entry name" value="SCRL"/>
    <property type="match status" value="1"/>
</dbReference>
<comment type="subcellular location">
    <subcellularLocation>
        <location evidence="1">Secreted</location>
    </subcellularLocation>
</comment>
<comment type="similarity">
    <text evidence="3">Belongs to the DEFL family.</text>
</comment>
<comment type="caution">
    <text evidence="3">Could be the product of a pseudogene. Lacks 1 of the 4 disulfide bonds, which are conserved features of the family.</text>
</comment>
<organism>
    <name type="scientific">Arabidopsis thaliana</name>
    <name type="common">Mouse-ear cress</name>
    <dbReference type="NCBI Taxonomy" id="3702"/>
    <lineage>
        <taxon>Eukaryota</taxon>
        <taxon>Viridiplantae</taxon>
        <taxon>Streptophyta</taxon>
        <taxon>Embryophyta</taxon>
        <taxon>Tracheophyta</taxon>
        <taxon>Spermatophyta</taxon>
        <taxon>Magnoliopsida</taxon>
        <taxon>eudicotyledons</taxon>
        <taxon>Gunneridae</taxon>
        <taxon>Pentapetalae</taxon>
        <taxon>rosids</taxon>
        <taxon>malvids</taxon>
        <taxon>Brassicales</taxon>
        <taxon>Brassicaceae</taxon>
        <taxon>Camelineae</taxon>
        <taxon>Arabidopsis</taxon>
    </lineage>
</organism>
<proteinExistence type="uncertain"/>
<accession>P82620</accession>